<organismHost>
    <name type="scientific">Escherichia coli</name>
    <dbReference type="NCBI Taxonomy" id="562"/>
</organismHost>
<organism>
    <name type="scientific">Escherichia phage G4</name>
    <name type="common">Bacteriophage G4</name>
    <dbReference type="NCBI Taxonomy" id="10843"/>
    <lineage>
        <taxon>Viruses</taxon>
        <taxon>Monodnaviria</taxon>
        <taxon>Sangervirae</taxon>
        <taxon>Phixviricota</taxon>
        <taxon>Malgrandaviricetes</taxon>
        <taxon>Petitvirales</taxon>
        <taxon>Microviridae</taxon>
        <taxon>Bullavirinae</taxon>
        <taxon>Gequatrovirus</taxon>
        <taxon>Gequatrovirus G4</taxon>
    </lineage>
</organism>
<dbReference type="EMBL" id="V00657">
    <property type="protein sequence ID" value="CAA24015.1"/>
    <property type="molecule type" value="Genomic_DNA"/>
</dbReference>
<dbReference type="PIR" id="A04244">
    <property type="entry name" value="ZCBPG4"/>
</dbReference>
<dbReference type="SMR" id="P03636"/>
<dbReference type="OrthoDB" id="21864at10239"/>
<dbReference type="Proteomes" id="UP000002140">
    <property type="component" value="Segment"/>
</dbReference>
<dbReference type="GO" id="GO:0019073">
    <property type="term" value="P:viral DNA genome packaging"/>
    <property type="evidence" value="ECO:0007669"/>
    <property type="project" value="InterPro"/>
</dbReference>
<dbReference type="InterPro" id="IPR016407">
    <property type="entry name" value="C-protein"/>
</dbReference>
<dbReference type="Pfam" id="PF12025">
    <property type="entry name" value="Phage_C"/>
    <property type="match status" value="1"/>
</dbReference>
<dbReference type="PIRSF" id="PIRSF004155">
    <property type="entry name" value="Phage_C"/>
    <property type="match status" value="1"/>
</dbReference>
<comment type="function">
    <text>C protein is one of the proteins involved in the production and packaging of viral single-stranded DNA.</text>
</comment>
<proteinExistence type="predicted"/>
<keyword id="KW-1185">Reference proteome</keyword>
<feature type="chain" id="PRO_0000164873" description="C protein">
    <location>
        <begin position="1"/>
        <end position="84"/>
    </location>
</feature>
<protein>
    <recommendedName>
        <fullName>C protein</fullName>
    </recommendedName>
</protein>
<sequence length="84" mass="9873">MRKFNLNLKNSRSSYFATFRHHLNVLAKTDALDEEKYLNMLGALLKDWFRYEEHFVHGKQSMLDILKERGLLSTSSTDTNHKGN</sequence>
<reference key="1">
    <citation type="journal article" date="1978" name="Nature">
        <title>Nucleotide sequence of bacteriophage G4 DNA.</title>
        <authorList>
            <person name="Godson G.N."/>
            <person name="Barrell B.G."/>
            <person name="Staden R."/>
            <person name="Fiddes J.C."/>
        </authorList>
    </citation>
    <scope>NUCLEOTIDE SEQUENCE [GENOMIC DNA]</scope>
</reference>
<accession>P03636</accession>
<gene>
    <name type="primary">C</name>
</gene>
<name>VGC_BPG4</name>